<feature type="signal peptide" evidence="2">
    <location>
        <begin position="1"/>
        <end position="35"/>
    </location>
</feature>
<feature type="chain" id="PRO_0000342045" description="Cytochrome f">
    <location>
        <begin position="36"/>
        <end position="322"/>
    </location>
</feature>
<feature type="transmembrane region" description="Helical" evidence="2">
    <location>
        <begin position="288"/>
        <end position="308"/>
    </location>
</feature>
<feature type="binding site" description="axial binding residue" evidence="2">
    <location>
        <position position="38"/>
    </location>
    <ligand>
        <name>heme</name>
        <dbReference type="ChEBI" id="CHEBI:30413"/>
    </ligand>
    <ligandPart>
        <name>Fe</name>
        <dbReference type="ChEBI" id="CHEBI:18248"/>
    </ligandPart>
</feature>
<feature type="binding site" description="covalent" evidence="2">
    <location>
        <position position="58"/>
    </location>
    <ligand>
        <name>heme</name>
        <dbReference type="ChEBI" id="CHEBI:30413"/>
    </ligand>
</feature>
<feature type="binding site" description="covalent" evidence="2">
    <location>
        <position position="61"/>
    </location>
    <ligand>
        <name>heme</name>
        <dbReference type="ChEBI" id="CHEBI:30413"/>
    </ligand>
</feature>
<feature type="binding site" description="axial binding residue" evidence="2">
    <location>
        <position position="62"/>
    </location>
    <ligand>
        <name>heme</name>
        <dbReference type="ChEBI" id="CHEBI:30413"/>
    </ligand>
    <ligandPart>
        <name>Fe</name>
        <dbReference type="ChEBI" id="CHEBI:18248"/>
    </ligandPart>
</feature>
<geneLocation type="chloroplast"/>
<sequence>MQTRNTFSWTWIREEITRSISVSLMIYIITWSSISNAYPIFAQQNYENPREATGRIVCANCHLANKPVDIEVPQAVLPDTVFEAVVKIPYDMQLKQVLANGKKGALNVGAVLILPEGFELAPPDRISPEMKEKIGNLSFQNYRPNKKNILVIGPVPGQKYSEITFPILAPDPATNKDVHFLKYPIYVGGNRGRGQIYPDGSKSNNTVYNATAGGIISKILRKEKGVYEITIADASNGRQVIDIIPRGLELLVSEGESIKLDQPLTSNPNVGGFGQGDAEIVLQDPLRVQGLLFFLGSVVLAQIFLVLKKKQFEKVQLSEMNF</sequence>
<comment type="function">
    <text evidence="2">Component of the cytochrome b6-f complex, which mediates electron transfer between photosystem II (PSII) and photosystem I (PSI), cyclic electron flow around PSI, and state transitions.</text>
</comment>
<comment type="cofactor">
    <cofactor evidence="2">
        <name>heme</name>
        <dbReference type="ChEBI" id="CHEBI:30413"/>
    </cofactor>
    <text evidence="2">Binds 1 heme group covalently.</text>
</comment>
<comment type="subunit">
    <text evidence="1">The 4 large subunits of the cytochrome b6-f complex are cytochrome b6, subunit IV (17 kDa polypeptide, petD), cytochrome f and the Rieske protein, while the 4 small subunits are PetG, PetL, PetM and PetN. The complex functions as a dimer (By similarity).</text>
</comment>
<comment type="subcellular location">
    <subcellularLocation>
        <location evidence="2">Plastid</location>
        <location evidence="2">Chloroplast thylakoid membrane</location>
        <topology evidence="2">Single-pass membrane protein</topology>
    </subcellularLocation>
</comment>
<comment type="similarity">
    <text evidence="2">Belongs to the cytochrome f family.</text>
</comment>
<keyword id="KW-0150">Chloroplast</keyword>
<keyword id="KW-0249">Electron transport</keyword>
<keyword id="KW-0349">Heme</keyword>
<keyword id="KW-0408">Iron</keyword>
<keyword id="KW-0472">Membrane</keyword>
<keyword id="KW-0479">Metal-binding</keyword>
<keyword id="KW-0602">Photosynthesis</keyword>
<keyword id="KW-0934">Plastid</keyword>
<keyword id="KW-0732">Signal</keyword>
<keyword id="KW-0793">Thylakoid</keyword>
<keyword id="KW-0812">Transmembrane</keyword>
<keyword id="KW-1133">Transmembrane helix</keyword>
<keyword id="KW-0813">Transport</keyword>
<dbReference type="EMBL" id="AP009367">
    <property type="protein sequence ID" value="BAF49867.1"/>
    <property type="molecule type" value="Genomic_DNA"/>
</dbReference>
<dbReference type="RefSeq" id="YP_001123043.1">
    <property type="nucleotide sequence ID" value="NC_009266.1"/>
</dbReference>
<dbReference type="BMRB" id="A4QJL2"/>
<dbReference type="SMR" id="A4QJL2"/>
<dbReference type="GeneID" id="4962220"/>
<dbReference type="GO" id="GO:0009535">
    <property type="term" value="C:chloroplast thylakoid membrane"/>
    <property type="evidence" value="ECO:0007669"/>
    <property type="project" value="UniProtKB-SubCell"/>
</dbReference>
<dbReference type="GO" id="GO:0009055">
    <property type="term" value="F:electron transfer activity"/>
    <property type="evidence" value="ECO:0007669"/>
    <property type="project" value="UniProtKB-UniRule"/>
</dbReference>
<dbReference type="GO" id="GO:0020037">
    <property type="term" value="F:heme binding"/>
    <property type="evidence" value="ECO:0007669"/>
    <property type="project" value="InterPro"/>
</dbReference>
<dbReference type="GO" id="GO:0005506">
    <property type="term" value="F:iron ion binding"/>
    <property type="evidence" value="ECO:0007669"/>
    <property type="project" value="InterPro"/>
</dbReference>
<dbReference type="GO" id="GO:0015979">
    <property type="term" value="P:photosynthesis"/>
    <property type="evidence" value="ECO:0007669"/>
    <property type="project" value="UniProtKB-UniRule"/>
</dbReference>
<dbReference type="FunFam" id="1.20.5.700:FF:000001">
    <property type="entry name" value="Cytochrome f"/>
    <property type="match status" value="1"/>
</dbReference>
<dbReference type="FunFam" id="2.40.50.100:FF:000007">
    <property type="entry name" value="Cytochrome f"/>
    <property type="match status" value="1"/>
</dbReference>
<dbReference type="FunFam" id="2.60.40.830:FF:000001">
    <property type="entry name" value="Cytochrome f"/>
    <property type="match status" value="1"/>
</dbReference>
<dbReference type="Gene3D" id="2.40.50.100">
    <property type="match status" value="1"/>
</dbReference>
<dbReference type="Gene3D" id="2.60.40.830">
    <property type="entry name" value="Cytochrome f large domain"/>
    <property type="match status" value="1"/>
</dbReference>
<dbReference type="Gene3D" id="1.20.5.700">
    <property type="entry name" value="Single helix bin"/>
    <property type="match status" value="1"/>
</dbReference>
<dbReference type="HAMAP" id="MF_00610">
    <property type="entry name" value="Cytb6_f_cytF"/>
    <property type="match status" value="1"/>
</dbReference>
<dbReference type="InterPro" id="IPR024058">
    <property type="entry name" value="Cyt-f_TM"/>
</dbReference>
<dbReference type="InterPro" id="IPR002325">
    <property type="entry name" value="Cyt_f"/>
</dbReference>
<dbReference type="InterPro" id="IPR024094">
    <property type="entry name" value="Cyt_f_lg_dom"/>
</dbReference>
<dbReference type="InterPro" id="IPR036826">
    <property type="entry name" value="Cyt_f_lg_dom_sf"/>
</dbReference>
<dbReference type="InterPro" id="IPR011054">
    <property type="entry name" value="Rudment_hybrid_motif"/>
</dbReference>
<dbReference type="PANTHER" id="PTHR33288">
    <property type="match status" value="1"/>
</dbReference>
<dbReference type="PANTHER" id="PTHR33288:SF10">
    <property type="entry name" value="CYTOCHROME F"/>
    <property type="match status" value="1"/>
</dbReference>
<dbReference type="Pfam" id="PF01333">
    <property type="entry name" value="Apocytochr_F_C"/>
    <property type="match status" value="1"/>
</dbReference>
<dbReference type="Pfam" id="PF16639">
    <property type="entry name" value="Apocytochr_F_N"/>
    <property type="match status" value="1"/>
</dbReference>
<dbReference type="PRINTS" id="PR00610">
    <property type="entry name" value="CYTOCHROMEF"/>
</dbReference>
<dbReference type="SUPFAM" id="SSF103431">
    <property type="entry name" value="Cytochrome f subunit of the cytochrome b6f complex, transmembrane anchor"/>
    <property type="match status" value="1"/>
</dbReference>
<dbReference type="SUPFAM" id="SSF49441">
    <property type="entry name" value="Cytochrome f, large domain"/>
    <property type="match status" value="1"/>
</dbReference>
<dbReference type="SUPFAM" id="SSF51246">
    <property type="entry name" value="Rudiment single hybrid motif"/>
    <property type="match status" value="1"/>
</dbReference>
<dbReference type="PROSITE" id="PS51010">
    <property type="entry name" value="CYTF"/>
    <property type="match status" value="1"/>
</dbReference>
<gene>
    <name evidence="2" type="primary">petA</name>
</gene>
<proteinExistence type="inferred from homology"/>
<organism>
    <name type="scientific">Aethionema grandiflorum</name>
    <name type="common">Persian stone-cress</name>
    <dbReference type="NCBI Taxonomy" id="72657"/>
    <lineage>
        <taxon>Eukaryota</taxon>
        <taxon>Viridiplantae</taxon>
        <taxon>Streptophyta</taxon>
        <taxon>Embryophyta</taxon>
        <taxon>Tracheophyta</taxon>
        <taxon>Spermatophyta</taxon>
        <taxon>Magnoliopsida</taxon>
        <taxon>eudicotyledons</taxon>
        <taxon>Gunneridae</taxon>
        <taxon>Pentapetalae</taxon>
        <taxon>rosids</taxon>
        <taxon>malvids</taxon>
        <taxon>Brassicales</taxon>
        <taxon>Brassicaceae</taxon>
        <taxon>Aethionemeae</taxon>
        <taxon>Aethionema</taxon>
    </lineage>
</organism>
<name>CYF_AETGR</name>
<reference key="1">
    <citation type="submission" date="2007-03" db="EMBL/GenBank/DDBJ databases">
        <title>Sequencing analysis of Aethionema grandiflorum chloroplast DNA.</title>
        <authorList>
            <person name="Hosouchi T."/>
            <person name="Tsuruoka H."/>
            <person name="Kotani H."/>
        </authorList>
    </citation>
    <scope>NUCLEOTIDE SEQUENCE [LARGE SCALE GENOMIC DNA]</scope>
</reference>
<protein>
    <recommendedName>
        <fullName evidence="2">Cytochrome f</fullName>
    </recommendedName>
</protein>
<evidence type="ECO:0000250" key="1"/>
<evidence type="ECO:0000255" key="2">
    <source>
        <dbReference type="HAMAP-Rule" id="MF_00610"/>
    </source>
</evidence>
<accession>A4QJL2</accession>